<proteinExistence type="inferred from homology"/>
<keyword id="KW-0050">Antiport</keyword>
<keyword id="KW-0997">Cell inner membrane</keyword>
<keyword id="KW-1003">Cell membrane</keyword>
<keyword id="KW-0868">Chloride</keyword>
<keyword id="KW-0406">Ion transport</keyword>
<keyword id="KW-0472">Membrane</keyword>
<keyword id="KW-1185">Reference proteome</keyword>
<keyword id="KW-0812">Transmembrane</keyword>
<keyword id="KW-1133">Transmembrane helix</keyword>
<keyword id="KW-0813">Transport</keyword>
<accession>P58244</accession>
<feature type="chain" id="PRO_0000094475" description="H(+)/Cl(-) exchange transporter ClcA">
    <location>
        <begin position="1"/>
        <end position="473"/>
    </location>
</feature>
<feature type="topological domain" description="Cytoplasmic" evidence="1">
    <location>
        <begin position="1"/>
        <end position="32"/>
    </location>
</feature>
<feature type="transmembrane region" description="Helical" evidence="1">
    <location>
        <begin position="33"/>
        <end position="69"/>
    </location>
</feature>
<feature type="topological domain" description="Periplasmic" evidence="1">
    <location>
        <begin position="70"/>
        <end position="76"/>
    </location>
</feature>
<feature type="transmembrane region" description="Helical" evidence="1">
    <location>
        <begin position="77"/>
        <end position="100"/>
    </location>
</feature>
<feature type="intramembrane region" description="Helical" evidence="1">
    <location>
        <begin position="109"/>
        <end position="116"/>
    </location>
</feature>
<feature type="topological domain" description="Cytoplasmic" evidence="1">
    <location>
        <begin position="117"/>
        <end position="123"/>
    </location>
</feature>
<feature type="transmembrane region" description="Helical" evidence="1">
    <location>
        <begin position="124"/>
        <end position="141"/>
    </location>
</feature>
<feature type="transmembrane region" description="Helical" evidence="1">
    <location>
        <begin position="148"/>
        <end position="166"/>
    </location>
</feature>
<feature type="topological domain" description="Cytoplasmic" evidence="1">
    <location>
        <begin position="167"/>
        <end position="176"/>
    </location>
</feature>
<feature type="intramembrane region" description="Helical" evidence="1">
    <location>
        <begin position="177"/>
        <end position="189"/>
    </location>
</feature>
<feature type="intramembrane region" description="Helical" evidence="1">
    <location>
        <begin position="193"/>
        <end position="201"/>
    </location>
</feature>
<feature type="topological domain" description="Cytoplasmic" evidence="1">
    <location>
        <begin position="202"/>
        <end position="214"/>
    </location>
</feature>
<feature type="transmembrane region" description="Helical" evidence="1">
    <location>
        <begin position="215"/>
        <end position="232"/>
    </location>
</feature>
<feature type="topological domain" description="Periplasmic" evidence="1">
    <location>
        <begin position="233"/>
        <end position="252"/>
    </location>
</feature>
<feature type="transmembrane region" description="Helical" evidence="1">
    <location>
        <begin position="253"/>
        <end position="281"/>
    </location>
</feature>
<feature type="topological domain" description="Cytoplasmic" evidence="1">
    <location>
        <begin position="282"/>
        <end position="287"/>
    </location>
</feature>
<feature type="transmembrane region" description="Helical" evidence="1">
    <location>
        <begin position="288"/>
        <end position="309"/>
    </location>
</feature>
<feature type="topological domain" description="Periplasmic" evidence="1">
    <location>
        <begin position="310"/>
        <end position="329"/>
    </location>
</feature>
<feature type="transmembrane region" description="Helical" evidence="1">
    <location>
        <begin position="330"/>
        <end position="349"/>
    </location>
</feature>
<feature type="transmembrane region" description="Helical" evidence="1">
    <location>
        <begin position="355"/>
        <end position="376"/>
    </location>
</feature>
<feature type="topological domain" description="Periplasmic" evidence="1">
    <location>
        <begin position="377"/>
        <end position="386"/>
    </location>
</feature>
<feature type="intramembrane region" description="Helical" evidence="1">
    <location>
        <begin position="387"/>
        <end position="401"/>
    </location>
</feature>
<feature type="intramembrane region" description="Note=Loop between two helices" evidence="1">
    <location>
        <begin position="402"/>
        <end position="404"/>
    </location>
</feature>
<feature type="intramembrane region" description="Helical" evidence="1">
    <location>
        <begin position="405"/>
        <end position="416"/>
    </location>
</feature>
<feature type="intramembrane region" description="Note=Loop between two helices" evidence="1">
    <location>
        <begin position="417"/>
        <end position="421"/>
    </location>
</feature>
<feature type="transmembrane region" description="Helical" evidence="1">
    <location>
        <begin position="422"/>
        <end position="438"/>
    </location>
</feature>
<feature type="topological domain" description="Cytoplasmic" evidence="1">
    <location>
        <begin position="439"/>
        <end position="473"/>
    </location>
</feature>
<feature type="short sequence motif" description="Selectivity filter part_1" evidence="1">
    <location>
        <begin position="106"/>
        <end position="110"/>
    </location>
</feature>
<feature type="short sequence motif" description="Selectivity filter part_2" evidence="1">
    <location>
        <begin position="146"/>
        <end position="150"/>
    </location>
</feature>
<feature type="short sequence motif" description="Selectivity filter part_3" evidence="1">
    <location>
        <begin position="355"/>
        <end position="359"/>
    </location>
</feature>
<feature type="binding site" evidence="1">
    <location>
        <position position="107"/>
    </location>
    <ligand>
        <name>chloride</name>
        <dbReference type="ChEBI" id="CHEBI:17996"/>
    </ligand>
</feature>
<feature type="binding site" evidence="1">
    <location>
        <position position="356"/>
    </location>
    <ligand>
        <name>chloride</name>
        <dbReference type="ChEBI" id="CHEBI:17996"/>
    </ligand>
</feature>
<feature type="binding site" evidence="1">
    <location>
        <position position="357"/>
    </location>
    <ligand>
        <name>chloride</name>
        <dbReference type="ChEBI" id="CHEBI:17996"/>
    </ligand>
</feature>
<feature type="binding site" evidence="1">
    <location>
        <position position="445"/>
    </location>
    <ligand>
        <name>chloride</name>
        <dbReference type="ChEBI" id="CHEBI:17996"/>
    </ligand>
</feature>
<feature type="site" description="Mediates proton transfer from the outer aqueous phase to the interior of the protein; involved in linking H(+) and Cl(-) transport" evidence="1">
    <location>
        <position position="148"/>
    </location>
</feature>
<feature type="site" description="Mediates proton transfer from the protein to the inner aqueous phase" evidence="1">
    <location>
        <position position="203"/>
    </location>
</feature>
<dbReference type="EMBL" id="AE005174">
    <property type="protein sequence ID" value="AAG54459.1"/>
    <property type="molecule type" value="Genomic_DNA"/>
</dbReference>
<dbReference type="EMBL" id="BA000007">
    <property type="protein sequence ID" value="BAB33582.1"/>
    <property type="molecule type" value="Genomic_DNA"/>
</dbReference>
<dbReference type="PIR" id="G85499">
    <property type="entry name" value="G85499"/>
</dbReference>
<dbReference type="PIR" id="G90648">
    <property type="entry name" value="G90648"/>
</dbReference>
<dbReference type="RefSeq" id="NP_308186.1">
    <property type="nucleotide sequence ID" value="NC_002695.1"/>
</dbReference>
<dbReference type="RefSeq" id="WP_000845408.1">
    <property type="nucleotide sequence ID" value="NZ_VOAI01000002.1"/>
</dbReference>
<dbReference type="SMR" id="P58244"/>
<dbReference type="STRING" id="155864.Z0166"/>
<dbReference type="GeneID" id="913789"/>
<dbReference type="KEGG" id="ece:Z0166"/>
<dbReference type="KEGG" id="ecs:ECs_0159"/>
<dbReference type="PATRIC" id="fig|386585.9.peg.259"/>
<dbReference type="eggNOG" id="COG0038">
    <property type="taxonomic scope" value="Bacteria"/>
</dbReference>
<dbReference type="HOGENOM" id="CLU_015263_7_0_6"/>
<dbReference type="OMA" id="EGPTAQF"/>
<dbReference type="Proteomes" id="UP000000558">
    <property type="component" value="Chromosome"/>
</dbReference>
<dbReference type="Proteomes" id="UP000002519">
    <property type="component" value="Chromosome"/>
</dbReference>
<dbReference type="GO" id="GO:0005886">
    <property type="term" value="C:plasma membrane"/>
    <property type="evidence" value="ECO:0007669"/>
    <property type="project" value="UniProtKB-SubCell"/>
</dbReference>
<dbReference type="GO" id="GO:0015297">
    <property type="term" value="F:antiporter activity"/>
    <property type="evidence" value="ECO:0007669"/>
    <property type="project" value="UniProtKB-UniRule"/>
</dbReference>
<dbReference type="GO" id="GO:0005247">
    <property type="term" value="F:voltage-gated chloride channel activity"/>
    <property type="evidence" value="ECO:0007669"/>
    <property type="project" value="TreeGrafter"/>
</dbReference>
<dbReference type="CDD" id="cd01031">
    <property type="entry name" value="EriC"/>
    <property type="match status" value="1"/>
</dbReference>
<dbReference type="FunFam" id="1.10.3080.10:FF:000005">
    <property type="entry name" value="H(+)/Cl(-) exchange transporter ClcA"/>
    <property type="match status" value="1"/>
</dbReference>
<dbReference type="Gene3D" id="1.10.3080.10">
    <property type="entry name" value="Clc chloride channel"/>
    <property type="match status" value="1"/>
</dbReference>
<dbReference type="HAMAP" id="MF_01128">
    <property type="entry name" value="CLC_ClcA"/>
    <property type="match status" value="1"/>
</dbReference>
<dbReference type="InterPro" id="IPR023861">
    <property type="entry name" value="Cl-channel_ClcA"/>
</dbReference>
<dbReference type="InterPro" id="IPR014743">
    <property type="entry name" value="Cl-channel_core"/>
</dbReference>
<dbReference type="InterPro" id="IPR001807">
    <property type="entry name" value="ClC"/>
</dbReference>
<dbReference type="NCBIfam" id="NF003640">
    <property type="entry name" value="PRK05277.1"/>
    <property type="match status" value="1"/>
</dbReference>
<dbReference type="PANTHER" id="PTHR45711">
    <property type="entry name" value="CHLORIDE CHANNEL PROTEIN"/>
    <property type="match status" value="1"/>
</dbReference>
<dbReference type="PANTHER" id="PTHR45711:SF6">
    <property type="entry name" value="CHLORIDE CHANNEL PROTEIN"/>
    <property type="match status" value="1"/>
</dbReference>
<dbReference type="Pfam" id="PF00654">
    <property type="entry name" value="Voltage_CLC"/>
    <property type="match status" value="1"/>
</dbReference>
<dbReference type="PRINTS" id="PR00762">
    <property type="entry name" value="CLCHANNEL"/>
</dbReference>
<dbReference type="SUPFAM" id="SSF81340">
    <property type="entry name" value="Clc chloride channel"/>
    <property type="match status" value="1"/>
</dbReference>
<comment type="function">
    <text evidence="1">Proton-coupled chloride transporter. Functions as antiport system and exchanges two chloride ions for 1 proton. Probably acts as an electrical shunt for an outwardly-directed proton pump that is linked to amino acid decarboxylation, as part of the extreme acid resistance (XAR) response.</text>
</comment>
<comment type="catalytic activity">
    <reaction evidence="1">
        <text>2 chloride(in) + H(+)(out) = 2 chloride(out) + H(+)(in)</text>
        <dbReference type="Rhea" id="RHEA:29567"/>
        <dbReference type="ChEBI" id="CHEBI:15378"/>
        <dbReference type="ChEBI" id="CHEBI:17996"/>
    </reaction>
</comment>
<comment type="subunit">
    <text evidence="1">Homodimer.</text>
</comment>
<comment type="subcellular location">
    <subcellularLocation>
        <location evidence="1">Cell inner membrane</location>
        <topology evidence="1">Multi-pass membrane protein</topology>
    </subcellularLocation>
</comment>
<comment type="similarity">
    <text evidence="1">Belongs to the chloride channel (TC 2.A.49) family. ClcA subfamily.</text>
</comment>
<reference key="1">
    <citation type="journal article" date="2001" name="Nature">
        <title>Genome sequence of enterohaemorrhagic Escherichia coli O157:H7.</title>
        <authorList>
            <person name="Perna N.T."/>
            <person name="Plunkett G. III"/>
            <person name="Burland V."/>
            <person name="Mau B."/>
            <person name="Glasner J.D."/>
            <person name="Rose D.J."/>
            <person name="Mayhew G.F."/>
            <person name="Evans P.S."/>
            <person name="Gregor J."/>
            <person name="Kirkpatrick H.A."/>
            <person name="Posfai G."/>
            <person name="Hackett J."/>
            <person name="Klink S."/>
            <person name="Boutin A."/>
            <person name="Shao Y."/>
            <person name="Miller L."/>
            <person name="Grotbeck E.J."/>
            <person name="Davis N.W."/>
            <person name="Lim A."/>
            <person name="Dimalanta E.T."/>
            <person name="Potamousis K."/>
            <person name="Apodaca J."/>
            <person name="Anantharaman T.S."/>
            <person name="Lin J."/>
            <person name="Yen G."/>
            <person name="Schwartz D.C."/>
            <person name="Welch R.A."/>
            <person name="Blattner F.R."/>
        </authorList>
    </citation>
    <scope>NUCLEOTIDE SEQUENCE [LARGE SCALE GENOMIC DNA]</scope>
    <source>
        <strain>O157:H7 / EDL933 / ATCC 700927 / EHEC</strain>
    </source>
</reference>
<reference key="2">
    <citation type="journal article" date="2001" name="DNA Res.">
        <title>Complete genome sequence of enterohemorrhagic Escherichia coli O157:H7 and genomic comparison with a laboratory strain K-12.</title>
        <authorList>
            <person name="Hayashi T."/>
            <person name="Makino K."/>
            <person name="Ohnishi M."/>
            <person name="Kurokawa K."/>
            <person name="Ishii K."/>
            <person name="Yokoyama K."/>
            <person name="Han C.-G."/>
            <person name="Ohtsubo E."/>
            <person name="Nakayama K."/>
            <person name="Murata T."/>
            <person name="Tanaka M."/>
            <person name="Tobe T."/>
            <person name="Iida T."/>
            <person name="Takami H."/>
            <person name="Honda T."/>
            <person name="Sasakawa C."/>
            <person name="Ogasawara N."/>
            <person name="Yasunaga T."/>
            <person name="Kuhara S."/>
            <person name="Shiba T."/>
            <person name="Hattori M."/>
            <person name="Shinagawa H."/>
        </authorList>
    </citation>
    <scope>NUCLEOTIDE SEQUENCE [LARGE SCALE GENOMIC DNA]</scope>
    <source>
        <strain>O157:H7 / Sakai / RIMD 0509952 / EHEC</strain>
    </source>
</reference>
<sequence length="473" mass="50335">MKTDTPSLETPQAARLRRRQLIRQLLERDKTPLAILFMAAVVGTLVGLAAVAFDKGVAWLQNQRMGALVHTADNYPLLLTVAFLCSAVLAMFGYFLVRKYAPEAGGSGIPEIEGALEDQRPVRWWRVLPVKFFGGLGTLGGGMVLGREGPTVQIGGNIGRMVLDVFRLKGDEARHTLLATGAAAGLAAAFNAPLAGILFIIEEMRPQFRYTLISIKAVFIGVIMSTIMYRIFNHEVALIDVGKLSDAPLNTLWLYLILGIIFGIFGPIFNKWVLGMQDLLHRVHGGNITKWVLMGGAIGGLCGLLGFVAPATSGGGFNLIPIATAGNFSMGMLVFIFVARVITTLLCFSSGAPGGIFAPMLALGTVLGTAFGMVAVELFPQYHLEAGTFAIAGMGALLAASIRAPLTGIILVLEMTDNYQLILPMIITGLGATLLAQFTGGKPLYSAILARTLAKQEAEQLARSKAASASENT</sequence>
<organism>
    <name type="scientific">Escherichia coli O157:H7</name>
    <dbReference type="NCBI Taxonomy" id="83334"/>
    <lineage>
        <taxon>Bacteria</taxon>
        <taxon>Pseudomonadati</taxon>
        <taxon>Pseudomonadota</taxon>
        <taxon>Gammaproteobacteria</taxon>
        <taxon>Enterobacterales</taxon>
        <taxon>Enterobacteriaceae</taxon>
        <taxon>Escherichia</taxon>
    </lineage>
</organism>
<protein>
    <recommendedName>
        <fullName evidence="1">H(+)/Cl(-) exchange transporter ClcA</fullName>
    </recommendedName>
</protein>
<gene>
    <name evidence="1" type="primary">clcA</name>
    <name evidence="1" type="synonym">eriC</name>
    <name type="ordered locus">Z0166</name>
    <name type="ordered locus">ECs0159</name>
</gene>
<evidence type="ECO:0000255" key="1">
    <source>
        <dbReference type="HAMAP-Rule" id="MF_01128"/>
    </source>
</evidence>
<name>CLCA_ECO57</name>